<organism>
    <name type="scientific">Yellow fever virus (isolate Uganda/A7094A4/1948)</name>
    <name type="common">YFV</name>
    <dbReference type="NCBI Taxonomy" id="407139"/>
    <lineage>
        <taxon>Viruses</taxon>
        <taxon>Riboviria</taxon>
        <taxon>Orthornavirae</taxon>
        <taxon>Kitrinoviricota</taxon>
        <taxon>Flasuviricetes</taxon>
        <taxon>Amarillovirales</taxon>
        <taxon>Flaviviridae</taxon>
        <taxon>Orthoflavivirus</taxon>
        <taxon>Orthoflavivirus flavi</taxon>
    </lineage>
</organism>
<dbReference type="EC" id="3.4.21.91"/>
<dbReference type="EC" id="3.6.1.15" evidence="10"/>
<dbReference type="EC" id="3.6.4.13" evidence="10"/>
<dbReference type="EC" id="2.1.1.56" evidence="16"/>
<dbReference type="EC" id="2.1.1.57" evidence="16"/>
<dbReference type="EC" id="2.7.7.48" evidence="12"/>
<dbReference type="EMBL" id="AY968065">
    <property type="protein sequence ID" value="AAY34248.1"/>
    <property type="molecule type" value="Genomic_RNA"/>
</dbReference>
<dbReference type="BMRB" id="Q1X880"/>
<dbReference type="SMR" id="Q1X880"/>
<dbReference type="MEROPS" id="S07.001"/>
<dbReference type="Proteomes" id="UP000002486">
    <property type="component" value="Genome"/>
</dbReference>
<dbReference type="GO" id="GO:0005576">
    <property type="term" value="C:extracellular region"/>
    <property type="evidence" value="ECO:0007669"/>
    <property type="project" value="UniProtKB-SubCell"/>
</dbReference>
<dbReference type="GO" id="GO:0044167">
    <property type="term" value="C:host cell endoplasmic reticulum membrane"/>
    <property type="evidence" value="ECO:0007669"/>
    <property type="project" value="UniProtKB-SubCell"/>
</dbReference>
<dbReference type="GO" id="GO:0042025">
    <property type="term" value="C:host cell nucleus"/>
    <property type="evidence" value="ECO:0007669"/>
    <property type="project" value="UniProtKB-SubCell"/>
</dbReference>
<dbReference type="GO" id="GO:0044220">
    <property type="term" value="C:host cell perinuclear region of cytoplasm"/>
    <property type="evidence" value="ECO:0007669"/>
    <property type="project" value="UniProtKB-SubCell"/>
</dbReference>
<dbReference type="GO" id="GO:0016020">
    <property type="term" value="C:membrane"/>
    <property type="evidence" value="ECO:0007669"/>
    <property type="project" value="UniProtKB-KW"/>
</dbReference>
<dbReference type="GO" id="GO:0019028">
    <property type="term" value="C:viral capsid"/>
    <property type="evidence" value="ECO:0007669"/>
    <property type="project" value="UniProtKB-KW"/>
</dbReference>
<dbReference type="GO" id="GO:0019031">
    <property type="term" value="C:viral envelope"/>
    <property type="evidence" value="ECO:0007669"/>
    <property type="project" value="UniProtKB-KW"/>
</dbReference>
<dbReference type="GO" id="GO:0055036">
    <property type="term" value="C:virion membrane"/>
    <property type="evidence" value="ECO:0007669"/>
    <property type="project" value="UniProtKB-SubCell"/>
</dbReference>
<dbReference type="GO" id="GO:0005524">
    <property type="term" value="F:ATP binding"/>
    <property type="evidence" value="ECO:0007669"/>
    <property type="project" value="UniProtKB-KW"/>
</dbReference>
<dbReference type="GO" id="GO:0016887">
    <property type="term" value="F:ATP hydrolysis activity"/>
    <property type="evidence" value="ECO:0007669"/>
    <property type="project" value="RHEA"/>
</dbReference>
<dbReference type="GO" id="GO:0003725">
    <property type="term" value="F:double-stranded RNA binding"/>
    <property type="evidence" value="ECO:0007669"/>
    <property type="project" value="InterPro"/>
</dbReference>
<dbReference type="GO" id="GO:0005525">
    <property type="term" value="F:GTP binding"/>
    <property type="evidence" value="ECO:0007669"/>
    <property type="project" value="UniProtKB-KW"/>
</dbReference>
<dbReference type="GO" id="GO:0046872">
    <property type="term" value="F:metal ion binding"/>
    <property type="evidence" value="ECO:0007669"/>
    <property type="project" value="UniProtKB-KW"/>
</dbReference>
<dbReference type="GO" id="GO:0004483">
    <property type="term" value="F:mRNA (nucleoside-2'-O-)-methyltransferase activity"/>
    <property type="evidence" value="ECO:0007669"/>
    <property type="project" value="UniProtKB-EC"/>
</dbReference>
<dbReference type="GO" id="GO:0004482">
    <property type="term" value="F:mRNA 5'-cap (guanine-N7-)-methyltransferase activity"/>
    <property type="evidence" value="ECO:0007669"/>
    <property type="project" value="UniProtKB-EC"/>
</dbReference>
<dbReference type="GO" id="GO:0046983">
    <property type="term" value="F:protein dimerization activity"/>
    <property type="evidence" value="ECO:0007669"/>
    <property type="project" value="InterPro"/>
</dbReference>
<dbReference type="GO" id="GO:0003724">
    <property type="term" value="F:RNA helicase activity"/>
    <property type="evidence" value="ECO:0007669"/>
    <property type="project" value="UniProtKB-EC"/>
</dbReference>
<dbReference type="GO" id="GO:0003968">
    <property type="term" value="F:RNA-directed RNA polymerase activity"/>
    <property type="evidence" value="ECO:0007669"/>
    <property type="project" value="UniProtKB-KW"/>
</dbReference>
<dbReference type="GO" id="GO:0004252">
    <property type="term" value="F:serine-type endopeptidase activity"/>
    <property type="evidence" value="ECO:0007669"/>
    <property type="project" value="InterPro"/>
</dbReference>
<dbReference type="GO" id="GO:0005198">
    <property type="term" value="F:structural molecule activity"/>
    <property type="evidence" value="ECO:0007669"/>
    <property type="project" value="InterPro"/>
</dbReference>
<dbReference type="GO" id="GO:0075512">
    <property type="term" value="P:clathrin-dependent endocytosis of virus by host cell"/>
    <property type="evidence" value="ECO:0007669"/>
    <property type="project" value="UniProtKB-KW"/>
</dbReference>
<dbReference type="GO" id="GO:0039654">
    <property type="term" value="P:fusion of virus membrane with host endosome membrane"/>
    <property type="evidence" value="ECO:0007669"/>
    <property type="project" value="UniProtKB-KW"/>
</dbReference>
<dbReference type="GO" id="GO:0006508">
    <property type="term" value="P:proteolysis"/>
    <property type="evidence" value="ECO:0007669"/>
    <property type="project" value="UniProtKB-KW"/>
</dbReference>
<dbReference type="GO" id="GO:0039520">
    <property type="term" value="P:symbiont-mediated activation of host autophagy"/>
    <property type="evidence" value="ECO:0007669"/>
    <property type="project" value="UniProtKB-KW"/>
</dbReference>
<dbReference type="GO" id="GO:0052170">
    <property type="term" value="P:symbiont-mediated suppression of host innate immune response"/>
    <property type="evidence" value="ECO:0007669"/>
    <property type="project" value="UniProtKB-KW"/>
</dbReference>
<dbReference type="GO" id="GO:0039564">
    <property type="term" value="P:symbiont-mediated suppression of host JAK-STAT cascade via inhibition of STAT2 activity"/>
    <property type="evidence" value="ECO:0007669"/>
    <property type="project" value="UniProtKB-KW"/>
</dbReference>
<dbReference type="GO" id="GO:0039502">
    <property type="term" value="P:symbiont-mediated suppression of host type I interferon-mediated signaling pathway"/>
    <property type="evidence" value="ECO:0007669"/>
    <property type="project" value="UniProtKB-KW"/>
</dbReference>
<dbReference type="GO" id="GO:0039694">
    <property type="term" value="P:viral RNA genome replication"/>
    <property type="evidence" value="ECO:0007669"/>
    <property type="project" value="InterPro"/>
</dbReference>
<dbReference type="GO" id="GO:0019062">
    <property type="term" value="P:virion attachment to host cell"/>
    <property type="evidence" value="ECO:0007669"/>
    <property type="project" value="UniProtKB-KW"/>
</dbReference>
<dbReference type="CDD" id="cd20761">
    <property type="entry name" value="capping_2-OMTase_Flaviviridae"/>
    <property type="match status" value="1"/>
</dbReference>
<dbReference type="CDD" id="cd17931">
    <property type="entry name" value="DEXHc_viral_Ns3"/>
    <property type="match status" value="1"/>
</dbReference>
<dbReference type="CDD" id="cd12149">
    <property type="entry name" value="Flavi_E_C"/>
    <property type="match status" value="1"/>
</dbReference>
<dbReference type="CDD" id="cd17038">
    <property type="entry name" value="Flavi_M"/>
    <property type="match status" value="1"/>
</dbReference>
<dbReference type="CDD" id="cd23204">
    <property type="entry name" value="Flavivirus_RdRp"/>
    <property type="match status" value="1"/>
</dbReference>
<dbReference type="FunFam" id="1.20.1280.260:FF:000001">
    <property type="entry name" value="Envelope glycoprotein"/>
    <property type="match status" value="1"/>
</dbReference>
<dbReference type="FunFam" id="1.10.260.90:FF:000001">
    <property type="entry name" value="Genome polyprotein"/>
    <property type="match status" value="1"/>
</dbReference>
<dbReference type="FunFam" id="2.60.260.50:FF:000001">
    <property type="entry name" value="Genome polyprotein"/>
    <property type="match status" value="1"/>
</dbReference>
<dbReference type="FunFam" id="3.40.50.150:FF:000105">
    <property type="entry name" value="Genome polyprotein"/>
    <property type="match status" value="1"/>
</dbReference>
<dbReference type="Gene3D" id="1.10.10.930">
    <property type="match status" value="1"/>
</dbReference>
<dbReference type="Gene3D" id="1.10.260.90">
    <property type="match status" value="1"/>
</dbReference>
<dbReference type="Gene3D" id="1.20.1280.260">
    <property type="match status" value="1"/>
</dbReference>
<dbReference type="Gene3D" id="2.40.10.120">
    <property type="match status" value="2"/>
</dbReference>
<dbReference type="Gene3D" id="2.60.40.350">
    <property type="match status" value="1"/>
</dbReference>
<dbReference type="Gene3D" id="1.10.8.970">
    <property type="entry name" value="Flavivirus envelope glycoprotein M-like"/>
    <property type="match status" value="1"/>
</dbReference>
<dbReference type="Gene3D" id="2.60.260.50">
    <property type="entry name" value="Flavivirus polyprotein propeptide domain"/>
    <property type="match status" value="1"/>
</dbReference>
<dbReference type="Gene3D" id="3.30.70.2840">
    <property type="entry name" value="Flavivirus RNA-directed RNA polymerase, thumb domain"/>
    <property type="match status" value="3"/>
</dbReference>
<dbReference type="Gene3D" id="3.40.50.300">
    <property type="entry name" value="P-loop containing nucleotide triphosphate hydrolases"/>
    <property type="match status" value="2"/>
</dbReference>
<dbReference type="Gene3D" id="2.60.98.10">
    <property type="entry name" value="Tick-borne Encephalitis virus Glycoprotein, domain 1"/>
    <property type="match status" value="1"/>
</dbReference>
<dbReference type="Gene3D" id="3.40.50.150">
    <property type="entry name" value="Vaccinia Virus protein VP39"/>
    <property type="match status" value="1"/>
</dbReference>
<dbReference type="Gene3D" id="3.30.67.10">
    <property type="entry name" value="Viral Envelope Glycoprotein, domain 2"/>
    <property type="match status" value="1"/>
</dbReference>
<dbReference type="Gene3D" id="3.30.387.10">
    <property type="entry name" value="Viral Envelope Glycoprotein, domain 3"/>
    <property type="match status" value="1"/>
</dbReference>
<dbReference type="InterPro" id="IPR043502">
    <property type="entry name" value="DNA/RNA_pol_sf"/>
</dbReference>
<dbReference type="InterPro" id="IPR000069">
    <property type="entry name" value="Env_glycoprot_M_flavivir"/>
</dbReference>
<dbReference type="InterPro" id="IPR038302">
    <property type="entry name" value="Env_glycoprot_M_sf_flavivir"/>
</dbReference>
<dbReference type="InterPro" id="IPR013755">
    <property type="entry name" value="Flav_gly_cen_dom_subdom1"/>
</dbReference>
<dbReference type="InterPro" id="IPR001122">
    <property type="entry name" value="Flavi_capsidC"/>
</dbReference>
<dbReference type="InterPro" id="IPR037172">
    <property type="entry name" value="Flavi_capsidC_sf"/>
</dbReference>
<dbReference type="InterPro" id="IPR011492">
    <property type="entry name" value="Flavi_DEAD"/>
</dbReference>
<dbReference type="InterPro" id="IPR027287">
    <property type="entry name" value="Flavi_E_Ig-like"/>
</dbReference>
<dbReference type="InterPro" id="IPR026470">
    <property type="entry name" value="Flavi_E_Stem/Anchor_dom"/>
</dbReference>
<dbReference type="InterPro" id="IPR038345">
    <property type="entry name" value="Flavi_E_Stem/Anchor_dom_sf"/>
</dbReference>
<dbReference type="InterPro" id="IPR011998">
    <property type="entry name" value="Flavi_Glycoprot_E_cen/dimer"/>
</dbReference>
<dbReference type="InterPro" id="IPR001157">
    <property type="entry name" value="Flavi_NS1"/>
</dbReference>
<dbReference type="InterPro" id="IPR000752">
    <property type="entry name" value="Flavi_NS2A"/>
</dbReference>
<dbReference type="InterPro" id="IPR000487">
    <property type="entry name" value="Flavi_NS2B"/>
</dbReference>
<dbReference type="InterPro" id="IPR001850">
    <property type="entry name" value="Flavi_NS3_S7"/>
</dbReference>
<dbReference type="InterPro" id="IPR000404">
    <property type="entry name" value="Flavi_NS4A"/>
</dbReference>
<dbReference type="InterPro" id="IPR001528">
    <property type="entry name" value="Flavi_NS4B"/>
</dbReference>
<dbReference type="InterPro" id="IPR046811">
    <property type="entry name" value="Flavi_NS5_thumb"/>
</dbReference>
<dbReference type="InterPro" id="IPR002535">
    <property type="entry name" value="Flavi_propep"/>
</dbReference>
<dbReference type="InterPro" id="IPR038688">
    <property type="entry name" value="Flavi_propep_sf"/>
</dbReference>
<dbReference type="InterPro" id="IPR047530">
    <property type="entry name" value="Flavi_RdRp"/>
</dbReference>
<dbReference type="InterPro" id="IPR000208">
    <property type="entry name" value="Flavi_RdRp_fingers/palm"/>
</dbReference>
<dbReference type="InterPro" id="IPR000336">
    <property type="entry name" value="Flavivir/Alphavir_Ig-like_sf"/>
</dbReference>
<dbReference type="InterPro" id="IPR014412">
    <property type="entry name" value="Gen_Poly_FLV"/>
</dbReference>
<dbReference type="InterPro" id="IPR036253">
    <property type="entry name" value="Glycoprot_cen/dimer_sf"/>
</dbReference>
<dbReference type="InterPro" id="IPR038055">
    <property type="entry name" value="Glycoprot_E_dimer_dom"/>
</dbReference>
<dbReference type="InterPro" id="IPR013756">
    <property type="entry name" value="GlyE_cen_dom_subdom2"/>
</dbReference>
<dbReference type="InterPro" id="IPR014001">
    <property type="entry name" value="Helicase_ATP-bd"/>
</dbReference>
<dbReference type="InterPro" id="IPR001650">
    <property type="entry name" value="Helicase_C-like"/>
</dbReference>
<dbReference type="InterPro" id="IPR014756">
    <property type="entry name" value="Ig_E-set"/>
</dbReference>
<dbReference type="InterPro" id="IPR026490">
    <property type="entry name" value="mRNA_cap_0/1_MeTrfase"/>
</dbReference>
<dbReference type="InterPro" id="IPR049486">
    <property type="entry name" value="NS3-hel_C_flaviviridae"/>
</dbReference>
<dbReference type="InterPro" id="IPR027417">
    <property type="entry name" value="P-loop_NTPase"/>
</dbReference>
<dbReference type="InterPro" id="IPR009003">
    <property type="entry name" value="Peptidase_S1_PA"/>
</dbReference>
<dbReference type="InterPro" id="IPR007094">
    <property type="entry name" value="RNA-dir_pol_PSvirus"/>
</dbReference>
<dbReference type="InterPro" id="IPR002877">
    <property type="entry name" value="RNA_MeTrfase_FtsJ_dom"/>
</dbReference>
<dbReference type="InterPro" id="IPR029063">
    <property type="entry name" value="SAM-dependent_MTases_sf"/>
</dbReference>
<dbReference type="NCBIfam" id="TIGR04240">
    <property type="entry name" value="flavi_E_stem"/>
    <property type="match status" value="1"/>
</dbReference>
<dbReference type="Pfam" id="PF20907">
    <property type="entry name" value="Flav_NS3-hel_C"/>
    <property type="match status" value="1"/>
</dbReference>
<dbReference type="Pfam" id="PF01003">
    <property type="entry name" value="Flavi_capsid"/>
    <property type="match status" value="1"/>
</dbReference>
<dbReference type="Pfam" id="PF07652">
    <property type="entry name" value="Flavi_DEAD"/>
    <property type="match status" value="1"/>
</dbReference>
<dbReference type="Pfam" id="PF21659">
    <property type="entry name" value="Flavi_E_stem"/>
    <property type="match status" value="1"/>
</dbReference>
<dbReference type="Pfam" id="PF02832">
    <property type="entry name" value="Flavi_glycop_C"/>
    <property type="match status" value="1"/>
</dbReference>
<dbReference type="Pfam" id="PF00869">
    <property type="entry name" value="Flavi_glycoprot"/>
    <property type="match status" value="1"/>
</dbReference>
<dbReference type="Pfam" id="PF01004">
    <property type="entry name" value="Flavi_M"/>
    <property type="match status" value="1"/>
</dbReference>
<dbReference type="Pfam" id="PF00948">
    <property type="entry name" value="Flavi_NS1"/>
    <property type="match status" value="1"/>
</dbReference>
<dbReference type="Pfam" id="PF01005">
    <property type="entry name" value="Flavi_NS2A"/>
    <property type="match status" value="1"/>
</dbReference>
<dbReference type="Pfam" id="PF01002">
    <property type="entry name" value="Flavi_NS2B"/>
    <property type="match status" value="1"/>
</dbReference>
<dbReference type="Pfam" id="PF01350">
    <property type="entry name" value="Flavi_NS4A"/>
    <property type="match status" value="1"/>
</dbReference>
<dbReference type="Pfam" id="PF01349">
    <property type="entry name" value="Flavi_NS4B"/>
    <property type="match status" value="1"/>
</dbReference>
<dbReference type="Pfam" id="PF00972">
    <property type="entry name" value="Flavi_NS5"/>
    <property type="match status" value="1"/>
</dbReference>
<dbReference type="Pfam" id="PF20483">
    <property type="entry name" value="Flavi_NS5_thumb"/>
    <property type="match status" value="1"/>
</dbReference>
<dbReference type="Pfam" id="PF01570">
    <property type="entry name" value="Flavi_propep"/>
    <property type="match status" value="1"/>
</dbReference>
<dbReference type="Pfam" id="PF01728">
    <property type="entry name" value="FtsJ"/>
    <property type="match status" value="1"/>
</dbReference>
<dbReference type="Pfam" id="PF00949">
    <property type="entry name" value="Peptidase_S7"/>
    <property type="match status" value="1"/>
</dbReference>
<dbReference type="PIRSF" id="PIRSF003817">
    <property type="entry name" value="Gen_Poly_FLV"/>
    <property type="match status" value="1"/>
</dbReference>
<dbReference type="SMART" id="SM00487">
    <property type="entry name" value="DEXDc"/>
    <property type="match status" value="1"/>
</dbReference>
<dbReference type="SMART" id="SM00490">
    <property type="entry name" value="HELICc"/>
    <property type="match status" value="1"/>
</dbReference>
<dbReference type="SUPFAM" id="SSF56672">
    <property type="entry name" value="DNA/RNA polymerases"/>
    <property type="match status" value="1"/>
</dbReference>
<dbReference type="SUPFAM" id="SSF81296">
    <property type="entry name" value="E set domains"/>
    <property type="match status" value="1"/>
</dbReference>
<dbReference type="SUPFAM" id="SSF52540">
    <property type="entry name" value="P-loop containing nucleoside triphosphate hydrolases"/>
    <property type="match status" value="2"/>
</dbReference>
<dbReference type="SUPFAM" id="SSF53335">
    <property type="entry name" value="S-adenosyl-L-methionine-dependent methyltransferases"/>
    <property type="match status" value="1"/>
</dbReference>
<dbReference type="SUPFAM" id="SSF50494">
    <property type="entry name" value="Trypsin-like serine proteases"/>
    <property type="match status" value="1"/>
</dbReference>
<dbReference type="SUPFAM" id="SSF56983">
    <property type="entry name" value="Viral glycoprotein, central and dimerisation domains"/>
    <property type="match status" value="1"/>
</dbReference>
<dbReference type="PROSITE" id="PS51527">
    <property type="entry name" value="FLAVIVIRUS_NS2B"/>
    <property type="match status" value="1"/>
</dbReference>
<dbReference type="PROSITE" id="PS51528">
    <property type="entry name" value="FLAVIVIRUS_NS3PRO"/>
    <property type="match status" value="1"/>
</dbReference>
<dbReference type="PROSITE" id="PS51192">
    <property type="entry name" value="HELICASE_ATP_BIND_1"/>
    <property type="match status" value="1"/>
</dbReference>
<dbReference type="PROSITE" id="PS51194">
    <property type="entry name" value="HELICASE_CTER"/>
    <property type="match status" value="1"/>
</dbReference>
<dbReference type="PROSITE" id="PS50507">
    <property type="entry name" value="RDRP_SSRNA_POS"/>
    <property type="match status" value="1"/>
</dbReference>
<dbReference type="PROSITE" id="PS51591">
    <property type="entry name" value="RNA_CAP01_NS5_MT"/>
    <property type="match status" value="1"/>
</dbReference>
<sequence>MSGRKAQGKTLGVNMVRRGVRSLSNKIKQKTKQIGNRPGPSRGVQGFIFFFLFNILTGKKLTTHLKRLWRMLDPRQGLTVLRKVKRVVASLMRGLSSRKRRSSEMTMMPLLILSMVILGGGVTLVRKNRWLLLNVTAEDLGKTFSVGTGNCTTNILEAKYWCPDSMEYNCPNLSPREEPDDIDCWCYGVENVRVAYGRCDAVGRSKRSRRAIDLPTHENHGLKTRQEKWMTGRMGERQLQKIERWLVRNPFFAVTALAIAYLVGNNKTQRVVIALLVLAVGPAYSAHCIGITDRDFIEGVHGGTWVSASLEQDKCVTVMAPDKPSLDISLQTVAIDGPAEARKVCYSAVLTHVKINDKCPSTGEAHLAEENDGDNACKRTYSDRGWGNGCGLFGKGSIVACAKFTCAKSMSLFEVDQTKIQYVIRAQLHVGAKQENWNTDIKTLKFDALSGSQEAEFTGYGKATLECQVQTAVDFGNSYIAEMEKDSWIVDRQWAQDLTLPWQSGSGGIWREMHHLVEFEPPHAATIRVLALGNQEGSLKTALTGAMRVTKDENDNNLYKLHGGHVSCRVKLSALTLKGTSYKMCTDKMSFVKNPTDTGHGTVVMQVKVPKGAPCKIPVIVADDLTAAVNKGILVTVNPIASTNDDEVLIEVNPPFGDSYIIVGTGDSRLTYQWHKEGSSIGKLFTQTMKGVERLAVMGDAAWDFSSAGGFFTSVGKGIHTVFGSAFQGLFGGLSWITKVIMGAVLIWVGINTRNMTMSMSMILVGVIMMFLSLGVGADQGCAVNFGKRELKCGDGIFVFRDSDDWLTKYSYYPEDPVKLASIIKASYEEGKCGLNSVDSLEHEMWRSRADEINAIFEENEVDISIVVQDPKNIYQRGTHPFSRIRDGLQYGWKTWGKNLIFSPGRKNGSFIIDGKSRKECPFSNRVWNSFQIEEFGMGVFTTRVFMDAVFDYSVDCDGAILGAAVNGKKSAHGSPTFWMGSHEVNGTWMMHTLETLDYKECEWPLTHTIGTSVEESDMFMPRSIGGPVSSHNHIPGYKVQTNGPWMQVPLEVRREPCPGTSVVVDTSCDGRGKSTRSTTDSGKIIPEWCCRSCTMPPVSFHGSDGCWYPMEIRPMKTHESHLVRSWVTAGEVHAVPFGLVSMMIAMEVVLRKRQGPKQMLVGGIILLGAMLVGQVTMLDLVKLIVAVGLHFHEINNGGDAMYMALIASFSIRPGLLIGFGLRTLWSPRERLVMAFGAAMVEVALGGMMGGLWQYLNAVSLCVLTINAISSRKASNTILPLMALLTPVTMYEVRMATMLFCTVVIVGVLHQNSKDTSMQKTIPIVALTLTSYMGLTQPFLGLCAYMSTQVFGRRSIPVNEALAAAGLVGVLAGLAFQDMENFLGPIAVGGILMMLVSVAGKVDGLELKKLGEVSWEEEAEISGSSSRYDVALSEQGEFKLLSEDKVPWDQIVMTSLALVGAAIHPFALLLVLGGWVLHIKGARRSGDVLWDIPTPKVIEECEHLEDGIYGIFQSTFLGASQRGVGVAQGGVFHTMWHVTRGAFLLRNGKKLVPSWASVKEDLVAYGGSWKLDGKWDGEEEVQLIAAVPGKAVVNVQTKPSLFKVRNGGEIGAVALDYPSGTSGSPIVNRSGEVVGLYGNGILVGDNSFVSAISQTEVKEESKEELQEIPTMLKKGMTTILDFHPGAGKTRRFLPQILAECARRRLRTLVLAPTRVVLSEMKEAFHGLDVKFHTQAFSAHGSGKEVIDAMCHATLTYRMLEPTRVVNWEVIIMDEAHFLDPASIAARGWAAHRARANESATILMTATPPGTSDEFPHSNGEIEDVQTDIPSEPWTSGHEWILADKRPTAWFLPSIRAANVMAASLRKAGKNVVVLNRKTFEKEYPTIKQKRPDFILATDIAEMGANLCVERVLDCRTAYKPVLVDEGRKVAIKGPLRISASSAAQRRGRIGRNPNRDGDSYYYSEPTSEDNAHHVCWLEASMLLDNMEVRGGMVAPLYGIEGTKTPVSPGEMRLRDDQRRVFRELVRGCDLPVWLSWQVAKAGLKTNDRKWCFEGPEEHEILNDNGETVKCRSPGGAKKALRPRWCDERVSSDQSALADFIKFAEGRRGAAEMLVVLTELPDFLAKKGGEAMDTISVFLHSEEGSRAYRNALSMMPEAMTIVMLFILAGLLTSGMVIFFMSPKGMSRMSMAMGTMAGSGYLMFLGGVKPTHISYVMLIFFVLMVVIIPEPGQQRSIQDNQVAYLIIGILTLLSVVAANELGMLEKTKEDFFGKRNIATSGGTIPWSWPDLDLKPGAAWTVYVGIVTMLSPMLHHWIKVEYGNLSLSGIAQSASVLSFMDKGVPFMKMNISVVILLVSGWNSITVIPLLCGVGGAMLHWTLILPGIKAQQSKLAQKRVFHGVAKNPVVDGNPTADIEEAPEMPALYEKKLALYLLLALSLMSVAMCRTPFSLAEGIVLSSAALGPLIEGNTSLLWNGPMAVSMTGVMRGNYYAFVGVMYNLWKMKTGRRGSANGKTLGEVWKRELNLLDKQQFELYKRTDITEVDRDMARRHLAEGKVDTGVAVSRGTAKLRWFHERGYVKLEGRVMDLGCGRGGWCYYAAAQKEVSGVKGYTLGRDGHEKPMNVQSLGWNIVTFKDKTDIHRLEPAKCETLLCDIGESSPSSVTEGERTLRVLETVEKWLACGVDNFCVKVLAPYMPDVIEKLELLQRRFGGTVIRNPLSRNSTHEMYYVSGARSNITFTVNQTSRLLMRRMRRPTGKVTLEPDVILPIGTRSVETDKGPLDRGAIEERVERIKTEYAATWFHDNDNPYRTWHYCGSYITKTSGSAASMINGVIKILTFPWDRIEEVTRMAMTDTTPFGQQRVFKEKVDTRAKDPPAGTRKIMRVVNRWLFRHLAREKKPRLCTKEEFIAKVRSHAAIGAFLEEQEQWKTANEAVQDPKFWEMVDAERKLHQQGRCQSCVYNMMGKREKKLSEFGKAKGSRAIWYMWLGARFLEFEALGFLNEDHWASRENSGGGVEGIGLQYLGYVIKDLSTKEGGGFYADDTAGWDTRITEADLDDEQEIMSYMNAEQRKLAWAVMEMTYKNKVVKVLRPAPGGKAFMDIISRRDQRGSGQVVTYALNTITNLKVQLIRMAEAEMVINHQHVNECDESALARLDAWLAENGCDRLARMAVSGDDCVVKPVDDRFGLALSHLNAMSKVRKDISEWQPSKGWTDWESVPFCSHHFHELVLKDGRKVVVPCRDQDELIGRGRVSPGNGWMIKETACLSKAYANMWSLMYFHKRDMRLLSFAVSSAVPTAWVPSGRTTWSVHGKGEWMTTEDMLDVWNRVWVLNNPHMKDKTTVKEWRDVPYLTKRQDKLCGSLIGMTNRATWASHIHLVIHRIRNLIGQEKYTDYLTVMDRYSVDADLQPGELI</sequence>
<accession>Q1X880</accession>
<protein>
    <recommendedName>
        <fullName>Genome polyprotein</fullName>
    </recommendedName>
    <component>
        <recommendedName>
            <fullName>Capsid protein C</fullName>
        </recommendedName>
        <alternativeName>
            <fullName>Core protein</fullName>
        </alternativeName>
    </component>
    <component>
        <recommendedName>
            <fullName>Protein prM</fullName>
        </recommendedName>
    </component>
    <component>
        <recommendedName>
            <fullName>Peptide pr</fullName>
        </recommendedName>
    </component>
    <component>
        <recommendedName>
            <fullName>Small envelope protein M</fullName>
        </recommendedName>
        <alternativeName>
            <fullName>Matrix protein</fullName>
        </alternativeName>
    </component>
    <component>
        <recommendedName>
            <fullName>Envelope protein E</fullName>
        </recommendedName>
    </component>
    <component>
        <recommendedName>
            <fullName>Non-structural protein 1</fullName>
            <shortName>NS1</shortName>
        </recommendedName>
    </component>
    <component>
        <recommendedName>
            <fullName>Non-structural protein 2A</fullName>
            <shortName>NS2A</shortName>
        </recommendedName>
    </component>
    <component>
        <recommendedName>
            <fullName>Non-structural protein 2A-alpha</fullName>
            <shortName>NS2A-alpha</shortName>
        </recommendedName>
    </component>
    <component>
        <recommendedName>
            <fullName>Serine protease subunit NS2B</fullName>
        </recommendedName>
        <alternativeName>
            <fullName>Flavivirin protease NS2B regulatory subunit</fullName>
        </alternativeName>
        <alternativeName>
            <fullName>Non-structural protein 2B</fullName>
        </alternativeName>
    </component>
    <component>
        <recommendedName>
            <fullName>Serine protease NS3</fullName>
            <ecNumber>3.4.21.91</ecNumber>
            <ecNumber evidence="10">3.6.1.15</ecNumber>
            <ecNumber evidence="10">3.6.4.13</ecNumber>
        </recommendedName>
        <alternativeName>
            <fullName>Flavivirin protease NS3 catalytic subunit</fullName>
        </alternativeName>
        <alternativeName>
            <fullName>Non-structural protein 3</fullName>
        </alternativeName>
    </component>
    <component>
        <recommendedName>
            <fullName>Non-structural protein 4A</fullName>
            <shortName>NS4A</shortName>
        </recommendedName>
    </component>
    <component>
        <recommendedName>
            <fullName>Peptide 2k</fullName>
        </recommendedName>
    </component>
    <component>
        <recommendedName>
            <fullName>Non-structural protein 4B</fullName>
            <shortName>NS4B</shortName>
        </recommendedName>
    </component>
    <component>
        <recommendedName>
            <fullName>RNA-directed RNA polymerase NS5</fullName>
            <ecNumber evidence="16">2.1.1.56</ecNumber>
            <ecNumber evidence="16">2.1.1.57</ecNumber>
            <ecNumber evidence="12">2.7.7.48</ecNumber>
        </recommendedName>
        <alternativeName>
            <fullName>Non-structural protein 5</fullName>
        </alternativeName>
    </component>
</protein>
<reference key="1">
    <citation type="journal article" date="2006" name="J. Gen. Virol.">
        <title>Genome analysis and phylogenetic relationships between east, central and west African isolates of Yellow fever virus.</title>
        <authorList>
            <person name="von Lindern J.J."/>
            <person name="Aroner S."/>
            <person name="Barrett N.D."/>
            <person name="Wicker J.A."/>
            <person name="Davis C.T."/>
            <person name="Barrett A.D."/>
        </authorList>
    </citation>
    <scope>NUCLEOTIDE SEQUENCE [GENOMIC RNA]</scope>
</reference>
<evidence type="ECO:0000250" key="1"/>
<evidence type="ECO:0000250" key="2">
    <source>
        <dbReference type="UniProtKB" id="P03314"/>
    </source>
</evidence>
<evidence type="ECO:0000250" key="3">
    <source>
        <dbReference type="UniProtKB" id="P14335"/>
    </source>
</evidence>
<evidence type="ECO:0000250" key="4">
    <source>
        <dbReference type="UniProtKB" id="P14336"/>
    </source>
</evidence>
<evidence type="ECO:0000250" key="5">
    <source>
        <dbReference type="UniProtKB" id="P14340"/>
    </source>
</evidence>
<evidence type="ECO:0000250" key="6">
    <source>
        <dbReference type="UniProtKB" id="P17763"/>
    </source>
</evidence>
<evidence type="ECO:0000250" key="7">
    <source>
        <dbReference type="UniProtKB" id="P29990"/>
    </source>
</evidence>
<evidence type="ECO:0000250" key="8">
    <source>
        <dbReference type="UniProtKB" id="Q32ZE1"/>
    </source>
</evidence>
<evidence type="ECO:0000250" key="9">
    <source>
        <dbReference type="UniProtKB" id="Q6YMS4"/>
    </source>
</evidence>
<evidence type="ECO:0000250" key="10">
    <source>
        <dbReference type="UniProtKB" id="Q9Q6P4"/>
    </source>
</evidence>
<evidence type="ECO:0000255" key="11"/>
<evidence type="ECO:0000255" key="12">
    <source>
        <dbReference type="PROSITE-ProRule" id="PRU00539"/>
    </source>
</evidence>
<evidence type="ECO:0000255" key="13">
    <source>
        <dbReference type="PROSITE-ProRule" id="PRU00541"/>
    </source>
</evidence>
<evidence type="ECO:0000255" key="14">
    <source>
        <dbReference type="PROSITE-ProRule" id="PRU00859"/>
    </source>
</evidence>
<evidence type="ECO:0000255" key="15">
    <source>
        <dbReference type="PROSITE-ProRule" id="PRU00860"/>
    </source>
</evidence>
<evidence type="ECO:0000255" key="16">
    <source>
        <dbReference type="PROSITE-ProRule" id="PRU00924"/>
    </source>
</evidence>
<evidence type="ECO:0000256" key="17">
    <source>
        <dbReference type="SAM" id="MobiDB-lite"/>
    </source>
</evidence>
<evidence type="ECO:0000305" key="18"/>
<feature type="chain" id="PRO_0000405160" description="Genome polyprotein">
    <location>
        <begin position="1"/>
        <end position="3412"/>
    </location>
</feature>
<feature type="chain" id="PRO_0000261530" description="Capsid protein C" evidence="2">
    <location>
        <begin position="1"/>
        <end position="101"/>
    </location>
</feature>
<feature type="propeptide" id="PRO_0000261531" description="ER anchor for the capsid protein C, removed in mature form by serine protease NS3" evidence="2">
    <location>
        <begin position="102"/>
        <end position="121"/>
    </location>
</feature>
<feature type="chain" id="PRO_0000261532" description="Protein prM" evidence="7">
    <location>
        <begin position="122"/>
        <end position="285"/>
    </location>
</feature>
<feature type="chain" id="PRO_0000261533" description="Peptide pr" evidence="7">
    <location>
        <begin position="122"/>
        <end position="210"/>
    </location>
</feature>
<feature type="chain" id="PRO_0000261534" description="Small envelope protein M" evidence="7">
    <location>
        <begin position="211"/>
        <end position="285"/>
    </location>
</feature>
<feature type="chain" id="PRO_0000261535" description="Envelope protein E" evidence="7">
    <location>
        <begin position="286"/>
        <end position="778"/>
    </location>
</feature>
<feature type="chain" id="PRO_0000261536" description="Non-structural protein 1" evidence="2">
    <location>
        <begin position="779"/>
        <end position="1130"/>
    </location>
</feature>
<feature type="chain" id="PRO_0000261537" description="Non-structural protein 2A" evidence="7">
    <location>
        <begin position="1131"/>
        <end position="1354"/>
    </location>
</feature>
<feature type="chain" id="PRO_0000261538" description="Non-structural protein 2A-alpha" evidence="7">
    <location>
        <begin position="1131"/>
        <end position="1320"/>
    </location>
</feature>
<feature type="chain" id="PRO_0000261539" description="Serine protease subunit NS2B" evidence="2">
    <location>
        <begin position="1355"/>
        <end position="1484"/>
    </location>
</feature>
<feature type="chain" id="PRO_0000261540" description="Serine protease NS3" evidence="2">
    <location>
        <begin position="1485"/>
        <end position="2107"/>
    </location>
</feature>
<feature type="chain" id="PRO_0000261541" description="Non-structural protein 4A" evidence="2">
    <location>
        <begin position="2108"/>
        <end position="2233"/>
    </location>
</feature>
<feature type="peptide" id="PRO_0000261542" description="Peptide 2k" evidence="2">
    <location>
        <begin position="2234"/>
        <end position="2256"/>
    </location>
</feature>
<feature type="chain" id="PRO_0000261543" description="Non-structural protein 4B" evidence="2">
    <location>
        <begin position="2257"/>
        <end position="2507"/>
    </location>
</feature>
<feature type="chain" id="PRO_0000261544" description="RNA-directed RNA polymerase NS5" evidence="2">
    <location>
        <begin position="2508"/>
        <end position="3412"/>
    </location>
</feature>
<feature type="topological domain" description="Cytoplasmic" evidence="11">
    <location>
        <begin position="1"/>
        <end position="104"/>
    </location>
</feature>
<feature type="transmembrane region" description="Helical" evidence="11">
    <location>
        <begin position="105"/>
        <end position="125"/>
    </location>
</feature>
<feature type="topological domain" description="Extracellular" evidence="11">
    <location>
        <begin position="126"/>
        <end position="244"/>
    </location>
</feature>
<feature type="transmembrane region" description="Helical" evidence="11">
    <location>
        <begin position="245"/>
        <end position="265"/>
    </location>
</feature>
<feature type="topological domain" description="Cytoplasmic" evidence="11">
    <location>
        <begin position="266"/>
        <end position="270"/>
    </location>
</feature>
<feature type="transmembrane region" description="Helical" evidence="11">
    <location>
        <begin position="271"/>
        <end position="285"/>
    </location>
</feature>
<feature type="topological domain" description="Extracellular" evidence="11">
    <location>
        <begin position="286"/>
        <end position="730"/>
    </location>
</feature>
<feature type="transmembrane region" description="Helical" evidence="11">
    <location>
        <begin position="731"/>
        <end position="751"/>
    </location>
</feature>
<feature type="topological domain" description="Extracellular" evidence="11">
    <location>
        <begin position="752"/>
        <end position="757"/>
    </location>
</feature>
<feature type="transmembrane region" description="Helical" evidence="11">
    <location>
        <begin position="758"/>
        <end position="778"/>
    </location>
</feature>
<feature type="topological domain" description="Extracellular" evidence="2">
    <location>
        <begin position="779"/>
        <end position="1132"/>
    </location>
</feature>
<feature type="transmembrane region" description="Helical" evidence="2">
    <location>
        <begin position="1133"/>
        <end position="1153"/>
    </location>
</feature>
<feature type="topological domain" description="Cytoplasmic" evidence="2">
    <location>
        <begin position="1154"/>
        <end position="1201"/>
    </location>
</feature>
<feature type="transmembrane region" description="Helical" evidence="2">
    <location>
        <begin position="1202"/>
        <end position="1222"/>
    </location>
</feature>
<feature type="topological domain" description="Lumenal" evidence="2">
    <location>
        <begin position="1223"/>
        <end position="1287"/>
    </location>
</feature>
<feature type="transmembrane region" description="Helical" evidence="2">
    <location>
        <begin position="1288"/>
        <end position="1308"/>
    </location>
</feature>
<feature type="topological domain" description="Cytoplasmic" evidence="2">
    <location>
        <begin position="1309"/>
        <end position="1355"/>
    </location>
</feature>
<feature type="transmembrane region" description="Helical" evidence="2">
    <location>
        <begin position="1356"/>
        <end position="1376"/>
    </location>
</feature>
<feature type="topological domain" description="Lumenal" evidence="2">
    <location>
        <begin position="1377"/>
        <end position="1378"/>
    </location>
</feature>
<feature type="transmembrane region" description="Helical" evidence="11">
    <location>
        <begin position="1379"/>
        <end position="1399"/>
    </location>
</feature>
<feature type="topological domain" description="Cytoplasmic" evidence="11">
    <location>
        <begin position="1400"/>
        <end position="1456"/>
    </location>
</feature>
<feature type="intramembrane region" description="Helical" evidence="11">
    <location>
        <begin position="1457"/>
        <end position="1477"/>
    </location>
</feature>
<feature type="topological domain" description="Cytoplasmic" evidence="11">
    <location>
        <begin position="1478"/>
        <end position="2157"/>
    </location>
</feature>
<feature type="transmembrane region" description="Helical" evidence="11">
    <location>
        <begin position="2158"/>
        <end position="2178"/>
    </location>
</feature>
<feature type="topological domain" description="Lumenal" evidence="11">
    <location>
        <begin position="2179"/>
        <end position="2186"/>
    </location>
</feature>
<feature type="intramembrane region" description="Helical" evidence="11">
    <location>
        <begin position="2187"/>
        <end position="2207"/>
    </location>
</feature>
<feature type="topological domain" description="Lumenal" evidence="11">
    <location>
        <begin position="2208"/>
        <end position="2209"/>
    </location>
</feature>
<feature type="transmembrane region" description="Helical" evidence="11">
    <location>
        <begin position="2210"/>
        <end position="2230"/>
    </location>
</feature>
<feature type="topological domain" description="Cytoplasmic" evidence="11">
    <location>
        <begin position="2231"/>
        <end position="2241"/>
    </location>
</feature>
<feature type="transmembrane region" description="Helical; Note=Signal for NS4B" evidence="11">
    <location>
        <begin position="2242"/>
        <end position="2262"/>
    </location>
</feature>
<feature type="topological domain" description="Lumenal" evidence="11">
    <location>
        <begin position="2263"/>
        <end position="2293"/>
    </location>
</feature>
<feature type="intramembrane region" description="Helical" evidence="11">
    <location>
        <begin position="2294"/>
        <end position="2314"/>
    </location>
</feature>
<feature type="topological domain" description="Lumenal" evidence="11">
    <location>
        <begin position="2315"/>
        <end position="2360"/>
    </location>
</feature>
<feature type="transmembrane region" description="Helical" evidence="11">
    <location>
        <begin position="2361"/>
        <end position="2380"/>
    </location>
</feature>
<feature type="topological domain" description="Cytoplasmic" evidence="11">
    <location>
        <begin position="2381"/>
        <end position="2421"/>
    </location>
</feature>
<feature type="transmembrane region" description="Helical" evidence="11">
    <location>
        <begin position="2422"/>
        <end position="2442"/>
    </location>
</feature>
<feature type="topological domain" description="Lumenal" evidence="11">
    <location>
        <begin position="2443"/>
        <end position="2445"/>
    </location>
</feature>
<feature type="transmembrane region" description="Helical" evidence="11">
    <location>
        <begin position="2446"/>
        <end position="2466"/>
    </location>
</feature>
<feature type="topological domain" description="Cytoplasmic" evidence="11">
    <location>
        <begin position="2467"/>
        <end position="3411"/>
    </location>
</feature>
<feature type="domain" description="Peptidase S7" evidence="15">
    <location>
        <begin position="1485"/>
        <end position="1665"/>
    </location>
</feature>
<feature type="domain" description="Helicase ATP-binding" evidence="13">
    <location>
        <begin position="1669"/>
        <end position="1825"/>
    </location>
</feature>
<feature type="domain" description="Helicase C-terminal">
    <location>
        <begin position="1820"/>
        <end position="1997"/>
    </location>
</feature>
<feature type="domain" description="mRNA cap 0-1 NS5-type MT" evidence="16">
    <location>
        <begin position="2508"/>
        <end position="2772"/>
    </location>
</feature>
<feature type="domain" description="RdRp catalytic" evidence="12">
    <location>
        <begin position="3036"/>
        <end position="3188"/>
    </location>
</feature>
<feature type="region of interest" description="Hydrophobic; homodimerization of capsid protein C" evidence="7">
    <location>
        <begin position="38"/>
        <end position="72"/>
    </location>
</feature>
<feature type="region of interest" description="Fusion peptide" evidence="4">
    <location>
        <begin position="383"/>
        <end position="396"/>
    </location>
</feature>
<feature type="region of interest" description="Interacts with and activates NS3 protease" evidence="14">
    <location>
        <begin position="1407"/>
        <end position="1446"/>
    </location>
</feature>
<feature type="region of interest" description="Important for RNA-binding" evidence="5">
    <location>
        <begin position="1673"/>
        <end position="1676"/>
    </location>
</feature>
<feature type="region of interest" description="Disordered" evidence="17">
    <location>
        <begin position="1942"/>
        <end position="1961"/>
    </location>
</feature>
<feature type="short sequence motif" description="DEAH box" evidence="13">
    <location>
        <begin position="1773"/>
        <end position="1776"/>
    </location>
</feature>
<feature type="short sequence motif" description="Nuclear localization signal" evidence="1">
    <location>
        <begin position="2879"/>
        <end position="2912"/>
    </location>
</feature>
<feature type="active site" description="Charge relay system; for serine protease NS3 activity" evidence="15">
    <location>
        <position position="1537"/>
    </location>
</feature>
<feature type="active site" description="Charge relay system; for serine protease NS3 activity" evidence="15">
    <location>
        <position position="1561"/>
    </location>
</feature>
<feature type="active site" description="Charge relay system; for serine protease NS3 activity" evidence="15">
    <location>
        <position position="1622"/>
    </location>
</feature>
<feature type="active site" description="For 2'-O-MTase activity" evidence="9">
    <location>
        <position position="2568"/>
    </location>
</feature>
<feature type="active site" description="For 2'-O-MTase activity" evidence="9">
    <location>
        <position position="2653"/>
    </location>
</feature>
<feature type="active site" description="For 2'-O-MTase activity" evidence="9">
    <location>
        <position position="2689"/>
    </location>
</feature>
<feature type="active site" description="For 2'-O-MTase activity" evidence="9">
    <location>
        <position position="2725"/>
    </location>
</feature>
<feature type="binding site" evidence="13">
    <location>
        <begin position="1682"/>
        <end position="1689"/>
    </location>
    <ligand>
        <name>ATP</name>
        <dbReference type="ChEBI" id="CHEBI:30616"/>
    </ligand>
</feature>
<feature type="binding site" evidence="16">
    <location>
        <position position="2563"/>
    </location>
    <ligand>
        <name>S-adenosyl-L-methionine</name>
        <dbReference type="ChEBI" id="CHEBI:59789"/>
    </ligand>
</feature>
<feature type="binding site" evidence="16">
    <location>
        <position position="2593"/>
    </location>
    <ligand>
        <name>S-adenosyl-L-methionine</name>
        <dbReference type="ChEBI" id="CHEBI:59789"/>
    </ligand>
</feature>
<feature type="binding site" evidence="16">
    <location>
        <position position="2594"/>
    </location>
    <ligand>
        <name>S-adenosyl-L-methionine</name>
        <dbReference type="ChEBI" id="CHEBI:59789"/>
    </ligand>
</feature>
<feature type="binding site" evidence="16">
    <location>
        <position position="2611"/>
    </location>
    <ligand>
        <name>S-adenosyl-L-methionine</name>
        <dbReference type="ChEBI" id="CHEBI:59789"/>
    </ligand>
</feature>
<feature type="binding site" evidence="16">
    <location>
        <position position="2612"/>
    </location>
    <ligand>
        <name>S-adenosyl-L-methionine</name>
        <dbReference type="ChEBI" id="CHEBI:59789"/>
    </ligand>
</feature>
<feature type="binding site" evidence="16">
    <location>
        <position position="2638"/>
    </location>
    <ligand>
        <name>S-adenosyl-L-methionine</name>
        <dbReference type="ChEBI" id="CHEBI:59789"/>
    </ligand>
</feature>
<feature type="binding site" evidence="16">
    <location>
        <position position="2639"/>
    </location>
    <ligand>
        <name>S-adenosyl-L-methionine</name>
        <dbReference type="ChEBI" id="CHEBI:59789"/>
    </ligand>
</feature>
<feature type="binding site" evidence="16">
    <location>
        <position position="2654"/>
    </location>
    <ligand>
        <name>S-adenosyl-L-methionine</name>
        <dbReference type="ChEBI" id="CHEBI:59789"/>
    </ligand>
</feature>
<feature type="binding site" evidence="16">
    <location>
        <position position="2727"/>
    </location>
    <ligand>
        <name>S-adenosyl-L-methionine</name>
        <dbReference type="ChEBI" id="CHEBI:59789"/>
    </ligand>
</feature>
<feature type="binding site" evidence="3">
    <location>
        <position position="2946"/>
    </location>
    <ligand>
        <name>Zn(2+)</name>
        <dbReference type="ChEBI" id="CHEBI:29105"/>
        <label>1</label>
    </ligand>
</feature>
<feature type="binding site" evidence="3">
    <location>
        <position position="2950"/>
    </location>
    <ligand>
        <name>Zn(2+)</name>
        <dbReference type="ChEBI" id="CHEBI:29105"/>
        <label>1</label>
    </ligand>
</feature>
<feature type="binding site" evidence="3">
    <location>
        <position position="2955"/>
    </location>
    <ligand>
        <name>Zn(2+)</name>
        <dbReference type="ChEBI" id="CHEBI:29105"/>
        <label>1</label>
    </ligand>
</feature>
<feature type="binding site" evidence="3">
    <location>
        <position position="2958"/>
    </location>
    <ligand>
        <name>Zn(2+)</name>
        <dbReference type="ChEBI" id="CHEBI:29105"/>
        <label>1</label>
    </ligand>
</feature>
<feature type="binding site" evidence="3">
    <location>
        <position position="3223"/>
    </location>
    <ligand>
        <name>Zn(2+)</name>
        <dbReference type="ChEBI" id="CHEBI:29105"/>
        <label>2</label>
    </ligand>
</feature>
<feature type="binding site" evidence="3">
    <location>
        <position position="3239"/>
    </location>
    <ligand>
        <name>Zn(2+)</name>
        <dbReference type="ChEBI" id="CHEBI:29105"/>
        <label>2</label>
    </ligand>
</feature>
<feature type="binding site" evidence="3">
    <location>
        <position position="3358"/>
    </location>
    <ligand>
        <name>Zn(2+)</name>
        <dbReference type="ChEBI" id="CHEBI:29105"/>
        <label>2</label>
    </ligand>
</feature>
<feature type="site" description="Cleavage; by viral protease NS3" evidence="2">
    <location>
        <begin position="101"/>
        <end position="102"/>
    </location>
</feature>
<feature type="site" description="Cleavage; by host signal peptidase" evidence="2">
    <location>
        <begin position="121"/>
        <end position="122"/>
    </location>
</feature>
<feature type="site" description="Cleavage; by host furin" evidence="7">
    <location>
        <begin position="210"/>
        <end position="211"/>
    </location>
</feature>
<feature type="site" description="Cleavage; by host signal peptidase" evidence="7">
    <location>
        <begin position="285"/>
        <end position="286"/>
    </location>
</feature>
<feature type="site" description="Cleavage; by host signal peptidase" evidence="2">
    <location>
        <begin position="778"/>
        <end position="779"/>
    </location>
</feature>
<feature type="site" description="Cleavage; by host" evidence="7">
    <location>
        <begin position="1130"/>
        <end position="1131"/>
    </location>
</feature>
<feature type="site" description="Cleavage; by viral protease NS3" evidence="7">
    <location>
        <begin position="1354"/>
        <end position="1355"/>
    </location>
</feature>
<feature type="site" description="Cleavage; by autolysis" evidence="2">
    <location>
        <begin position="1484"/>
        <end position="1485"/>
    </location>
</feature>
<feature type="site" description="Involved in NS3 ATPase and RTPase activities" evidence="3">
    <location>
        <position position="1945"/>
    </location>
</feature>
<feature type="site" description="Involved in NS3 ATPase and RTPase activities" evidence="3">
    <location>
        <position position="1948"/>
    </location>
</feature>
<feature type="site" description="Cleavage; by autolysis" evidence="2">
    <location>
        <begin position="2107"/>
        <end position="2108"/>
    </location>
</feature>
<feature type="site" description="Cleavage; by viral protease NS3" evidence="7">
    <location>
        <begin position="2233"/>
        <end position="2234"/>
    </location>
</feature>
<feature type="site" description="Cleavage; by host signal peptidase" evidence="7">
    <location>
        <begin position="2256"/>
        <end position="2257"/>
    </location>
</feature>
<feature type="site" description="Cleavage; by viral protease NS3" evidence="2">
    <location>
        <begin position="2507"/>
        <end position="2508"/>
    </location>
</feature>
<feature type="site" description="mRNA cap binding" evidence="16">
    <location>
        <position position="2520"/>
    </location>
</feature>
<feature type="site" description="mRNA cap binding; via carbonyl oxygen" evidence="16">
    <location>
        <position position="2523"/>
    </location>
</feature>
<feature type="site" description="mRNA cap binding" evidence="16">
    <location>
        <position position="2524"/>
    </location>
</feature>
<feature type="site" description="mRNA cap binding; via carbonyl oxygen" evidence="16">
    <location>
        <position position="2526"/>
    </location>
</feature>
<feature type="site" description="mRNA cap binding" evidence="16">
    <location>
        <position position="2531"/>
    </location>
</feature>
<feature type="site" description="mRNA cap binding" evidence="16">
    <location>
        <position position="2535"/>
    </location>
</feature>
<feature type="site" description="Essential for 2'-O-methyltransferase activity" evidence="16">
    <location>
        <position position="2568"/>
    </location>
</feature>
<feature type="site" description="Essential for 2'-O-methyltransferase and N-7 methyltransferase activity" evidence="16">
    <location>
        <position position="2653"/>
    </location>
</feature>
<feature type="site" description="mRNA cap binding" evidence="16">
    <location>
        <position position="2657"/>
    </location>
</feature>
<feature type="site" description="Essential for 2'-O-methyltransferase activity" evidence="16">
    <location>
        <position position="2689"/>
    </location>
</feature>
<feature type="site" description="mRNA cap binding" evidence="16">
    <location>
        <position position="2720"/>
    </location>
</feature>
<feature type="site" description="mRNA cap binding" evidence="16">
    <location>
        <position position="2722"/>
    </location>
</feature>
<feature type="site" description="Essential for 2'-O-methyltransferase activity" evidence="16">
    <location>
        <position position="2725"/>
    </location>
</feature>
<feature type="modified residue" description="N6-acetyllysine; by host" evidence="8">
    <location>
        <position position="1877"/>
    </location>
</feature>
<feature type="modified residue" description="Phosphoserine" evidence="2">
    <location>
        <position position="2563"/>
    </location>
</feature>
<feature type="glycosylation site" description="N-linked (GlcNAc...) asparagine; by host" evidence="11">
    <location>
        <position position="134"/>
    </location>
</feature>
<feature type="glycosylation site" description="N-linked (GlcNAc...) asparagine; by host" evidence="11">
    <location>
        <position position="150"/>
    </location>
</feature>
<feature type="glycosylation site" description="N-linked (GlcNAc...) asparagine; by host" evidence="11">
    <location>
        <position position="908"/>
    </location>
</feature>
<feature type="glycosylation site" description="N-linked (GlcNAc...) asparagine; by host" evidence="11">
    <location>
        <position position="986"/>
    </location>
</feature>
<feature type="disulfide bond" evidence="6">
    <location>
        <begin position="288"/>
        <end position="315"/>
    </location>
</feature>
<feature type="disulfide bond" evidence="6">
    <location>
        <begin position="345"/>
        <end position="406"/>
    </location>
</feature>
<feature type="disulfide bond" evidence="1">
    <location>
        <begin position="345"/>
        <end position="401"/>
    </location>
</feature>
<feature type="disulfide bond" evidence="6">
    <location>
        <begin position="359"/>
        <end position="390"/>
    </location>
</feature>
<feature type="disulfide bond" evidence="1">
    <location>
        <begin position="377"/>
        <end position="406"/>
    </location>
</feature>
<feature type="disulfide bond" evidence="6">
    <location>
        <begin position="377"/>
        <end position="401"/>
    </location>
</feature>
<feature type="disulfide bond" evidence="6">
    <location>
        <begin position="467"/>
        <end position="568"/>
    </location>
</feature>
<feature type="disulfide bond" evidence="6">
    <location>
        <begin position="585"/>
        <end position="615"/>
    </location>
</feature>
<feature type="disulfide bond" evidence="6">
    <location>
        <begin position="782"/>
        <end position="793"/>
    </location>
</feature>
<feature type="disulfide bond" evidence="6">
    <location>
        <begin position="833"/>
        <end position="921"/>
    </location>
</feature>
<feature type="disulfide bond" evidence="6">
    <location>
        <begin position="957"/>
        <end position="1002"/>
    </location>
</feature>
<feature type="disulfide bond" evidence="6">
    <location>
        <begin position="1058"/>
        <end position="1107"/>
    </location>
</feature>
<feature type="disulfide bond" evidence="6">
    <location>
        <begin position="1069"/>
        <end position="1091"/>
    </location>
</feature>
<feature type="disulfide bond" evidence="6">
    <location>
        <begin position="1090"/>
        <end position="1094"/>
    </location>
</feature>
<proteinExistence type="inferred from homology"/>
<comment type="function">
    <molecule>Capsid protein C</molecule>
    <text evidence="6">Plays a role in virus budding by binding to the cell membrane and gathering the viral RNA into a nucleocapsid that forms the core of a mature virus particle. During virus entry, may induce genome penetration into the host cytoplasm after hemifusion induced by the surface proteins. Can migrate to the cell nucleus where it modulates host functions.</text>
</comment>
<comment type="function">
    <molecule>Capsid protein C</molecule>
    <text evidence="2">Inhibits RNA silencing by interfering with host Dicer.</text>
</comment>
<comment type="function">
    <molecule>Peptide pr</molecule>
    <text evidence="6">Prevents premature fusion activity of envelope proteins in trans-Golgi by binding to envelope protein E at pH6.0. After virion release in extracellular space, gets dissociated from E dimers.</text>
</comment>
<comment type="function">
    <molecule>Protein prM</molecule>
    <text evidence="6">Acts as a chaperone for envelope protein E during intracellular virion assembly by masking and inactivating envelope protein E fusion peptide. prM is the only viral peptide matured by host furin in the trans-Golgi network probably to avoid catastrophic activation of the viral fusion activity in acidic Golgi compartment prior to virion release. prM-E cleavage is inefficient, and many virions are only partially matured. These uncleaved prM would play a role in immune evasion.</text>
</comment>
<comment type="function">
    <molecule>Small envelope protein M</molecule>
    <text evidence="6">May play a role in virus budding. Exerts cytotoxic effects by activating a mitochondrial apoptotic pathway through M ectodomain. May display a viroporin activity.</text>
</comment>
<comment type="function">
    <molecule>Envelope protein E</molecule>
    <text evidence="6">Binds to host cell surface receptor and mediates fusion between viral and cellular membranes. Envelope protein is synthesized in the endoplasmic reticulum in the form of heterodimer with protein prM. They play a role in virion budding in the ER, and the newly formed immature particle is covered with 60 spikes composed of heterodimer between precursor prM and envelope protein E. The virion is transported to the Golgi apparatus where the low pH causes dissociation of PrM-E heterodimers and formation of E homodimers. prM-E cleavage is inefficient, and many virions are only partially matured. These uncleaved prM would play a role in immune evasion.</text>
</comment>
<comment type="function">
    <molecule>Non-structural protein 1</molecule>
    <text evidence="10">Involved in immune evasion, pathogenesis and viral replication. Once cleaved off the polyprotein, is targeted to three destinations: the viral replication cycle, the plasma membrane and the extracellular compartment. Essential for viral replication. Required for formation of the replication complex and recruitment of other non-structural proteins to the ER-derived membrane structures. Excreted as a hexameric lipoparticle that plays a role against host immune response. Antagonizing the complement function. Binds to the host macrophages and dendritic cells. Inhibits signal transduction originating from Toll-like receptor 3 (TLR3).</text>
</comment>
<comment type="function">
    <molecule>Non-structural protein 2A</molecule>
    <text evidence="6">Component of the viral RNA replication complex that functions in virion assembly and antagonizes the host immune response.</text>
</comment>
<comment type="function">
    <molecule>Serine protease subunit NS2B</molecule>
    <text evidence="6 14">Required cofactor for the serine protease function of NS3. May have membrane-destabilizing activity and form viroporins (By similarity).</text>
</comment>
<comment type="function">
    <molecule>Serine protease NS3</molecule>
    <text evidence="2 15">Displays three enzymatic activities: serine protease, NTPase and RNA helicase. NS3 serine protease, in association with NS2B, performs its autocleavage and cleaves the polyprotein at dibasic sites in the cytoplasm: C-prM, NS2A-NS2B, NS2B-NS3, NS3-NS4A, NS4A-2K and NS4B-NS5. NS3 RNA helicase binds RNA and unwinds dsRNA in the 3' to 5' direction. Also plays a role in virus assembly (By similarity).</text>
</comment>
<comment type="function">
    <molecule>Non-structural protein 4A</molecule>
    <text evidence="10">Regulates the ATPase activity of the NS3 helicase activity. NS4A allows NS3 helicase to conserve energy during unwinding.</text>
</comment>
<comment type="function">
    <molecule>Peptide 2k</molecule>
    <text evidence="6">Functions as a signal peptide for NS4B and is required for the interferon antagonism activity of the latter.</text>
</comment>
<comment type="function">
    <molecule>Non-structural protein 4B</molecule>
    <text evidence="10">Induces the formation of ER-derived membrane vesicles where the viral replication takes place. Inhibits interferon (IFN)-induced host STAT1 phosphorylation and nuclear translocation, thereby preventing the establishment of cellular antiviral state by blocking the IFN-alpha/beta pathway.</text>
</comment>
<comment type="function">
    <molecule>RNA-directed RNA polymerase NS5</molecule>
    <text evidence="2">Replicates the viral (+) and (-) RNA genome, and performs the capping of genomes in the cytoplasm. NS5 methylates viral RNA cap at guanine N-7 and ribose 2'-O positions (By similarity). Besides its role in RNA genome replication, also prevents the establishment of cellular antiviral state by blocking the interferon-alpha/beta (IFN-alpha/beta) signaling pathway. IFN-I induces binding of NS5 to host IFN-activated transcription factor STAT2, preventing its transcriptional activity. Host TRIM23 is the E3 ligase that interacts with and polyubiquitinates NS5 to promote its binding to STAT2 and trigger IFN-I signaling inhibition.</text>
</comment>
<comment type="catalytic activity">
    <reaction>
        <text>Selective hydrolysis of -Xaa-Xaa-|-Yaa- bonds in which each of the Xaa can be either Arg or Lys and Yaa can be either Ser or Ala.</text>
        <dbReference type="EC" id="3.4.21.91"/>
    </reaction>
</comment>
<comment type="catalytic activity">
    <reaction evidence="12">
        <text>RNA(n) + a ribonucleoside 5'-triphosphate = RNA(n+1) + diphosphate</text>
        <dbReference type="Rhea" id="RHEA:21248"/>
        <dbReference type="Rhea" id="RHEA-COMP:14527"/>
        <dbReference type="Rhea" id="RHEA-COMP:17342"/>
        <dbReference type="ChEBI" id="CHEBI:33019"/>
        <dbReference type="ChEBI" id="CHEBI:61557"/>
        <dbReference type="ChEBI" id="CHEBI:140395"/>
        <dbReference type="EC" id="2.7.7.48"/>
    </reaction>
</comment>
<comment type="catalytic activity">
    <reaction>
        <text>a ribonucleoside 5'-triphosphate + H2O = a ribonucleoside 5'-diphosphate + phosphate + H(+)</text>
        <dbReference type="Rhea" id="RHEA:23680"/>
        <dbReference type="ChEBI" id="CHEBI:15377"/>
        <dbReference type="ChEBI" id="CHEBI:15378"/>
        <dbReference type="ChEBI" id="CHEBI:43474"/>
        <dbReference type="ChEBI" id="CHEBI:57930"/>
        <dbReference type="ChEBI" id="CHEBI:61557"/>
        <dbReference type="EC" id="3.6.1.15"/>
    </reaction>
</comment>
<comment type="catalytic activity">
    <reaction>
        <text>ATP + H2O = ADP + phosphate + H(+)</text>
        <dbReference type="Rhea" id="RHEA:13065"/>
        <dbReference type="ChEBI" id="CHEBI:15377"/>
        <dbReference type="ChEBI" id="CHEBI:15378"/>
        <dbReference type="ChEBI" id="CHEBI:30616"/>
        <dbReference type="ChEBI" id="CHEBI:43474"/>
        <dbReference type="ChEBI" id="CHEBI:456216"/>
        <dbReference type="EC" id="3.6.4.13"/>
    </reaction>
</comment>
<comment type="catalytic activity">
    <reaction evidence="16">
        <text>a 5'-end (5'-triphosphoguanosine)-ribonucleoside in mRNA + S-adenosyl-L-methionine = a 5'-end (N(7)-methyl 5'-triphosphoguanosine)-ribonucleoside in mRNA + S-adenosyl-L-homocysteine</text>
        <dbReference type="Rhea" id="RHEA:67008"/>
        <dbReference type="Rhea" id="RHEA-COMP:17166"/>
        <dbReference type="Rhea" id="RHEA-COMP:17167"/>
        <dbReference type="ChEBI" id="CHEBI:57856"/>
        <dbReference type="ChEBI" id="CHEBI:59789"/>
        <dbReference type="ChEBI" id="CHEBI:156461"/>
        <dbReference type="ChEBI" id="CHEBI:167617"/>
        <dbReference type="EC" id="2.1.1.56"/>
    </reaction>
</comment>
<comment type="catalytic activity">
    <reaction evidence="16">
        <text>a 5'-end (N(7)-methyl 5'-triphosphoguanosine)-ribonucleoside in mRNA + S-adenosyl-L-methionine = a 5'-end (N(7)-methyl 5'-triphosphoguanosine)-(2'-O-methyl-ribonucleoside) in mRNA + S-adenosyl-L-homocysteine + H(+)</text>
        <dbReference type="Rhea" id="RHEA:67020"/>
        <dbReference type="Rhea" id="RHEA-COMP:17167"/>
        <dbReference type="Rhea" id="RHEA-COMP:17168"/>
        <dbReference type="ChEBI" id="CHEBI:15378"/>
        <dbReference type="ChEBI" id="CHEBI:57856"/>
        <dbReference type="ChEBI" id="CHEBI:59789"/>
        <dbReference type="ChEBI" id="CHEBI:156461"/>
        <dbReference type="ChEBI" id="CHEBI:167609"/>
        <dbReference type="EC" id="2.1.1.57"/>
    </reaction>
</comment>
<comment type="subunit">
    <molecule>Capsid protein C</molecule>
    <text evidence="6">Homodimer (By similarity). Interacts (via N-terminus) with host EXOC1 (via C-terminus); this interaction results in EXOC1 degradation through the proteasome degradation pathway (By similarity).</text>
</comment>
<comment type="subunit">
    <molecule>Protein prM</molecule>
    <text evidence="6">Forms heterodimers with envelope protein E in the endoplasmic reticulum and Golgi.</text>
</comment>
<comment type="subunit">
    <molecule>Envelope protein E</molecule>
    <text evidence="6">Homodimer; in the endoplasmic reticulum and Golgi (By similarity). Interacts with protein prM (By similarity). Interacts with non-structural protein 1 (By similarity).</text>
</comment>
<comment type="subunit">
    <molecule>Non-structural protein 1</molecule>
    <text evidence="6">Homodimer; Homohexamer when secreted (By similarity). Interacts with envelope protein E (By similarity).</text>
</comment>
<comment type="subunit">
    <molecule>Non-structural protein 2A</molecule>
    <text evidence="2">Interacts (via N-terminus) with serine protease NS3.</text>
</comment>
<comment type="subunit">
    <molecule>Serine protease subunit NS2B</molecule>
    <text evidence="6">Forms a heterodimer with serine protease NS3 (By similarity). May form homooligomers (By similarity).</text>
</comment>
<comment type="subunit">
    <molecule>Serine protease NS3</molecule>
    <text evidence="6">Forms a heterodimer with NS2B (By similarity). Interacts with non-structural protein 2A (via N-terminus) (By similarity). Interacts with NS4B (By similarity). Interacts with unphosphorylated RNA-directed RNA polymerase NS5; this interaction stimulates RNA-directed RNA polymerase NS5 guanylyltransferase activity (By similarity). NS3 interacts with host PDCD6IP; this interaction contributes to virion release (By similarity).</text>
</comment>
<comment type="subunit">
    <molecule>Non-structural protein 4B</molecule>
    <text evidence="6">Interacts with serine protease NS3 (By similarity).</text>
</comment>
<comment type="subunit">
    <molecule>RNA-directed RNA polymerase NS5</molecule>
    <text evidence="2">Homodimer (By similarity). Interacts with host STAT2; this interaction prevents the establishment of cellular antiviral state (By similarity). Interacts with serine protease NS3 (By similarity). Interacts with host TRIM23; this interaction leads to NS5 ubiquitination (By similarity).</text>
</comment>
<comment type="subcellular location">
    <molecule>Capsid protein C</molecule>
    <subcellularLocation>
        <location evidence="6">Virion</location>
    </subcellularLocation>
    <subcellularLocation>
        <location evidence="6">Host nucleus</location>
    </subcellularLocation>
    <subcellularLocation>
        <location evidence="6">Host cytoplasm</location>
        <location evidence="6">Host perinuclear region</location>
    </subcellularLocation>
    <subcellularLocation>
        <location evidence="6">Host cytoplasm</location>
    </subcellularLocation>
</comment>
<comment type="subcellular location">
    <molecule>Peptide pr</molecule>
    <subcellularLocation>
        <location evidence="6">Secreted</location>
    </subcellularLocation>
</comment>
<comment type="subcellular location">
    <molecule>Small envelope protein M</molecule>
    <subcellularLocation>
        <location evidence="2">Virion membrane</location>
        <topology evidence="2">Multi-pass membrane protein</topology>
    </subcellularLocation>
    <subcellularLocation>
        <location evidence="2">Host endoplasmic reticulum membrane</location>
        <topology evidence="11">Multi-pass membrane protein</topology>
    </subcellularLocation>
    <text evidence="2">ER membrane retention is mediated by the transmembrane domains.</text>
</comment>
<comment type="subcellular location">
    <molecule>Envelope protein E</molecule>
    <subcellularLocation>
        <location evidence="18">Virion membrane</location>
        <topology evidence="2">Multi-pass membrane protein</topology>
    </subcellularLocation>
    <subcellularLocation>
        <location evidence="2">Host endoplasmic reticulum membrane</location>
        <topology evidence="11">Multi-pass membrane protein</topology>
    </subcellularLocation>
    <text evidence="2">ER membrane retention is mediated by the transmembrane domains.</text>
</comment>
<comment type="subcellular location">
    <molecule>Non-structural protein 1</molecule>
    <subcellularLocation>
        <location evidence="6">Secreted</location>
    </subcellularLocation>
    <subcellularLocation>
        <location>Host endoplasmic reticulum membrane</location>
        <topology>Peripheral membrane protein</topology>
        <orientation evidence="6">Lumenal side</orientation>
    </subcellularLocation>
    <text evidence="10">Located in RE-derived vesicles hosting the replication complex.</text>
</comment>
<comment type="subcellular location">
    <molecule>Non-structural protein 2A</molecule>
    <subcellularLocation>
        <location evidence="6">Host endoplasmic reticulum membrane</location>
        <topology evidence="6">Multi-pass membrane protein</topology>
    </subcellularLocation>
</comment>
<comment type="subcellular location">
    <molecule>Serine protease subunit NS2B</molecule>
    <subcellularLocation>
        <location>Host endoplasmic reticulum membrane</location>
        <topology evidence="6">Multi-pass membrane protein</topology>
    </subcellularLocation>
</comment>
<comment type="subcellular location">
    <molecule>Serine protease NS3</molecule>
    <subcellularLocation>
        <location evidence="15">Host endoplasmic reticulum membrane</location>
        <topology evidence="15">Peripheral membrane protein</topology>
        <orientation evidence="15">Cytoplasmic side</orientation>
    </subcellularLocation>
    <text evidence="15">Remains non-covalently associated to serine protease subunit NS2B.</text>
</comment>
<comment type="subcellular location">
    <molecule>Non-structural protein 4A</molecule>
    <subcellularLocation>
        <location evidence="6">Host endoplasmic reticulum membrane</location>
        <topology evidence="6">Multi-pass membrane protein</topology>
    </subcellularLocation>
    <text evidence="6">Located in RE-associated vesicles hosting the replication complex.</text>
</comment>
<comment type="subcellular location">
    <molecule>Non-structural protein 4B</molecule>
    <subcellularLocation>
        <location evidence="6">Host endoplasmic reticulum membrane</location>
        <topology evidence="6">Multi-pass membrane protein</topology>
    </subcellularLocation>
    <text evidence="10">Located in RE-derived vesicles hosting the replication complex.</text>
</comment>
<comment type="subcellular location">
    <molecule>RNA-directed RNA polymerase NS5</molecule>
    <subcellularLocation>
        <location>Host endoplasmic reticulum membrane</location>
        <topology>Peripheral membrane protein</topology>
        <orientation>Cytoplasmic side</orientation>
    </subcellularLocation>
    <subcellularLocation>
        <location evidence="6">Host nucleus</location>
    </subcellularLocation>
    <text evidence="6">Located in RE-associated vesicles hosting the replication complex. NS5 protein is mainly localized in the nucleus rather than in ER vesicles.</text>
</comment>
<comment type="domain">
    <text evidence="6">The transmembrane domains of the small envelope protein M and envelope protein E contain an endoplasmic reticulum retention signal.</text>
</comment>
<comment type="PTM">
    <molecule>Genome polyprotein</molecule>
    <text evidence="2">Specific enzymatic cleavages in vivo yield mature proteins. The nascent capsid protein C contains a C-terminal hydrophobic domain that act as a signal sequence for translocation of prM into the lumen of the ER. Mature capsid protein C is cleaved at a site upstream of this hydrophobic domain by NS3. prM is cleaved in post-Golgi vesicles by a host furin, releasing the mature small envelope protein M, and peptide pr. Non-structural protein 2A-alpha, a C-terminally truncated form of non-structural protein 2A, results from partial cleavage by NS3. Specific enzymatic cleavages in vivo yield mature proteins peptide 2K acts as a signal sequence and is removed from the N-terminus of NS4B by the host signal peptidase in the ER lumen. Signal cleavage at the 2K-4B site requires a prior NS3 protease-mediated cleavage at the 4A-2K site.</text>
</comment>
<comment type="PTM">
    <molecule>Protein prM</molecule>
    <text evidence="6">Cleaved in post-Golgi vesicles by a host furin, releasing the mature small envelope protein M, and peptide pr. This cleavage is incomplete as up to 30% of viral particles still carry uncleaved prM.</text>
</comment>
<comment type="PTM">
    <molecule>Envelope protein E</molecule>
    <text evidence="6">N-glycosylated.</text>
</comment>
<comment type="PTM">
    <molecule>Non-structural protein 1</molecule>
    <text evidence="6">N-glycosylated. The excreted form is glycosylated and this is required for efficient secretion of the protein from infected cells.</text>
</comment>
<comment type="PTM">
    <text evidence="2">Polyubiquitinated; ubiquitination is probably mediated by host TRIM23 and is prerequisite for NS5-STAT2 interaction. NS5 is not ISGylated or sumoylated.</text>
</comment>
<comment type="PTM">
    <molecule>Serine protease NS3</molecule>
    <text evidence="8">Acetylated by host KAT5. Acetylation modulates NS3 RNA-binding and unwinding activities and plays an important positive role for viral replication.</text>
</comment>
<comment type="PTM">
    <molecule>RNA-directed RNA polymerase NS5</molecule>
    <text evidence="6">Phosphorylated on serines residues. This phosphorylation may trigger NS5 nuclear localization.</text>
</comment>
<comment type="similarity">
    <text evidence="16">In the N-terminal section; belongs to the class I-like SAM-binding methyltransferase superfamily. mRNA cap 0-1 NS5-type methyltransferase family.</text>
</comment>
<name>POLG_YEFVU</name>
<organismHost>
    <name type="scientific">Aedes aegypti</name>
    <name type="common">Yellowfever mosquito</name>
    <name type="synonym">Culex aegypti</name>
    <dbReference type="NCBI Taxonomy" id="7159"/>
</organismHost>
<organismHost>
    <name type="scientific">Aedes luteocephalus</name>
    <name type="common">Mosquito</name>
    <dbReference type="NCBI Taxonomy" id="299629"/>
</organismHost>
<organismHost>
    <name type="scientific">Aedes simpsoni</name>
    <dbReference type="NCBI Taxonomy" id="7161"/>
</organismHost>
<organismHost>
    <name type="scientific">Homo sapiens</name>
    <name type="common">Human</name>
    <dbReference type="NCBI Taxonomy" id="9606"/>
</organismHost>
<organismHost>
    <name type="scientific">Simiiformes</name>
    <dbReference type="NCBI Taxonomy" id="314293"/>
</organismHost>
<keyword id="KW-0007">Acetylation</keyword>
<keyword id="KW-1072">Activation of host autophagy by virus</keyword>
<keyword id="KW-0067">ATP-binding</keyword>
<keyword id="KW-0167">Capsid protein</keyword>
<keyword id="KW-1165">Clathrin-mediated endocytosis of virus by host</keyword>
<keyword id="KW-0165">Cleavage on pair of basic residues</keyword>
<keyword id="KW-1015">Disulfide bond</keyword>
<keyword id="KW-1170">Fusion of virus membrane with host endosomal membrane</keyword>
<keyword id="KW-1168">Fusion of virus membrane with host membrane</keyword>
<keyword id="KW-0325">Glycoprotein</keyword>
<keyword id="KW-0342">GTP-binding</keyword>
<keyword id="KW-0347">Helicase</keyword>
<keyword id="KW-1035">Host cytoplasm</keyword>
<keyword id="KW-1038">Host endoplasmic reticulum</keyword>
<keyword id="KW-1043">Host membrane</keyword>
<keyword id="KW-1048">Host nucleus</keyword>
<keyword id="KW-0945">Host-virus interaction</keyword>
<keyword id="KW-0378">Hydrolase</keyword>
<keyword id="KW-1090">Inhibition of host innate immune response by virus</keyword>
<keyword id="KW-1114">Inhibition of host interferon signaling pathway by virus</keyword>
<keyword id="KW-1106">Inhibition of host STAT2 by virus</keyword>
<keyword id="KW-0922">Interferon antiviral system evasion</keyword>
<keyword id="KW-0472">Membrane</keyword>
<keyword id="KW-0479">Metal-binding</keyword>
<keyword id="KW-0489">Methyltransferase</keyword>
<keyword id="KW-0506">mRNA capping</keyword>
<keyword id="KW-0507">mRNA processing</keyword>
<keyword id="KW-0511">Multifunctional enzyme</keyword>
<keyword id="KW-0547">Nucleotide-binding</keyword>
<keyword id="KW-0548">Nucleotidyltransferase</keyword>
<keyword id="KW-0597">Phosphoprotein</keyword>
<keyword id="KW-0645">Protease</keyword>
<keyword id="KW-0694">RNA-binding</keyword>
<keyword id="KW-0696">RNA-directed RNA polymerase</keyword>
<keyword id="KW-0949">S-adenosyl-L-methionine</keyword>
<keyword id="KW-0964">Secreted</keyword>
<keyword id="KW-0720">Serine protease</keyword>
<keyword id="KW-0941">Suppressor of RNA silencing</keyword>
<keyword id="KW-0804">Transcription</keyword>
<keyword id="KW-0805">Transcription regulation</keyword>
<keyword id="KW-0808">Transferase</keyword>
<keyword id="KW-0812">Transmembrane</keyword>
<keyword id="KW-1133">Transmembrane helix</keyword>
<keyword id="KW-0832">Ubl conjugation</keyword>
<keyword id="KW-1161">Viral attachment to host cell</keyword>
<keyword id="KW-0261">Viral envelope protein</keyword>
<keyword id="KW-0899">Viral immunoevasion</keyword>
<keyword id="KW-1162">Viral penetration into host cytoplasm</keyword>
<keyword id="KW-0693">Viral RNA replication</keyword>
<keyword id="KW-0946">Virion</keyword>
<keyword id="KW-1164">Virus endocytosis by host</keyword>
<keyword id="KW-1160">Virus entry into host cell</keyword>
<keyword id="KW-0862">Zinc</keyword>